<comment type="function">
    <text evidence="2">Catalyzes the formation of N(7)-methylguanine at position 46 (m7G46) in tRNA.</text>
</comment>
<comment type="catalytic activity">
    <reaction evidence="2">
        <text>guanosine(46) in tRNA + S-adenosyl-L-methionine = N(7)-methylguanosine(46) in tRNA + S-adenosyl-L-homocysteine</text>
        <dbReference type="Rhea" id="RHEA:42708"/>
        <dbReference type="Rhea" id="RHEA-COMP:10188"/>
        <dbReference type="Rhea" id="RHEA-COMP:10189"/>
        <dbReference type="ChEBI" id="CHEBI:57856"/>
        <dbReference type="ChEBI" id="CHEBI:59789"/>
        <dbReference type="ChEBI" id="CHEBI:74269"/>
        <dbReference type="ChEBI" id="CHEBI:74480"/>
        <dbReference type="EC" id="2.1.1.33"/>
    </reaction>
</comment>
<comment type="pathway">
    <text evidence="2">tRNA modification; N(7)-methylguanine-tRNA biosynthesis.</text>
</comment>
<comment type="similarity">
    <text evidence="2">Belongs to the class I-like SAM-binding methyltransferase superfamily. TrmB family.</text>
</comment>
<accession>Q9Z6S3</accession>
<evidence type="ECO:0000250" key="1"/>
<evidence type="ECO:0000255" key="2">
    <source>
        <dbReference type="HAMAP-Rule" id="MF_01057"/>
    </source>
</evidence>
<gene>
    <name evidence="2" type="primary">trmB</name>
    <name type="ordered locus">CPn_0986</name>
    <name type="ordered locus">CP_0869</name>
    <name type="ordered locus">CPj0986</name>
    <name type="ordered locus">CpB1023</name>
</gene>
<proteinExistence type="inferred from homology"/>
<protein>
    <recommendedName>
        <fullName evidence="2">tRNA (guanine-N(7)-)-methyltransferase</fullName>
        <ecNumber evidence="2">2.1.1.33</ecNumber>
    </recommendedName>
    <alternativeName>
        <fullName evidence="2">tRNA (guanine(46)-N(7))-methyltransferase</fullName>
    </alternativeName>
    <alternativeName>
        <fullName evidence="2">tRNA(m7G46)-methyltransferase</fullName>
    </alternativeName>
</protein>
<dbReference type="EC" id="2.1.1.33" evidence="2"/>
<dbReference type="EMBL" id="AE001363">
    <property type="protein sequence ID" value="AAD19123.1"/>
    <property type="molecule type" value="Genomic_DNA"/>
</dbReference>
<dbReference type="EMBL" id="AE002161">
    <property type="protein sequence ID" value="AAF38658.1"/>
    <property type="molecule type" value="Genomic_DNA"/>
</dbReference>
<dbReference type="EMBL" id="BA000008">
    <property type="protein sequence ID" value="BAA99193.1"/>
    <property type="molecule type" value="Genomic_DNA"/>
</dbReference>
<dbReference type="EMBL" id="AE009440">
    <property type="protein sequence ID" value="AAP98952.1"/>
    <property type="molecule type" value="Genomic_DNA"/>
</dbReference>
<dbReference type="PIR" id="C72010">
    <property type="entry name" value="C72010"/>
</dbReference>
<dbReference type="PIR" id="G86613">
    <property type="entry name" value="G86613"/>
</dbReference>
<dbReference type="RefSeq" id="NP_225180.1">
    <property type="nucleotide sequence ID" value="NC_000922.1"/>
</dbReference>
<dbReference type="RefSeq" id="WP_010883619.1">
    <property type="nucleotide sequence ID" value="NZ_LN847257.1"/>
</dbReference>
<dbReference type="SMR" id="Q9Z6S3"/>
<dbReference type="STRING" id="406984.CPK_ORF00411"/>
<dbReference type="GeneID" id="45051141"/>
<dbReference type="KEGG" id="cpa:CP_0869"/>
<dbReference type="KEGG" id="cpj:yggH"/>
<dbReference type="KEGG" id="cpn:CPn_0986"/>
<dbReference type="KEGG" id="cpt:CpB1023"/>
<dbReference type="PATRIC" id="fig|115713.3.peg.1081"/>
<dbReference type="eggNOG" id="COG0220">
    <property type="taxonomic scope" value="Bacteria"/>
</dbReference>
<dbReference type="HOGENOM" id="CLU_050910_2_0_0"/>
<dbReference type="OrthoDB" id="9802090at2"/>
<dbReference type="UniPathway" id="UPA00989"/>
<dbReference type="Proteomes" id="UP000000583">
    <property type="component" value="Chromosome"/>
</dbReference>
<dbReference type="Proteomes" id="UP000000801">
    <property type="component" value="Chromosome"/>
</dbReference>
<dbReference type="GO" id="GO:0043527">
    <property type="term" value="C:tRNA methyltransferase complex"/>
    <property type="evidence" value="ECO:0007669"/>
    <property type="project" value="TreeGrafter"/>
</dbReference>
<dbReference type="GO" id="GO:0008176">
    <property type="term" value="F:tRNA (guanine(46)-N7)-methyltransferase activity"/>
    <property type="evidence" value="ECO:0007669"/>
    <property type="project" value="UniProtKB-UniRule"/>
</dbReference>
<dbReference type="Gene3D" id="3.40.50.150">
    <property type="entry name" value="Vaccinia Virus protein VP39"/>
    <property type="match status" value="1"/>
</dbReference>
<dbReference type="HAMAP" id="MF_01057">
    <property type="entry name" value="tRNA_methyltr_TrmB"/>
    <property type="match status" value="1"/>
</dbReference>
<dbReference type="InterPro" id="IPR029063">
    <property type="entry name" value="SAM-dependent_MTases_sf"/>
</dbReference>
<dbReference type="InterPro" id="IPR003358">
    <property type="entry name" value="tRNA_(Gua-N-7)_MeTrfase_Trmb"/>
</dbReference>
<dbReference type="InterPro" id="IPR055361">
    <property type="entry name" value="tRNA_methyltr_TrmB_bact"/>
</dbReference>
<dbReference type="PANTHER" id="PTHR23417">
    <property type="entry name" value="3-DEOXY-D-MANNO-OCTULOSONIC-ACID TRANSFERASE/TRNA GUANINE-N 7 - -METHYLTRANSFERASE"/>
    <property type="match status" value="1"/>
</dbReference>
<dbReference type="PANTHER" id="PTHR23417:SF14">
    <property type="entry name" value="PENTACOTRIPEPTIDE-REPEAT REGION OF PRORP DOMAIN-CONTAINING PROTEIN"/>
    <property type="match status" value="1"/>
</dbReference>
<dbReference type="Pfam" id="PF02390">
    <property type="entry name" value="Methyltransf_4"/>
    <property type="match status" value="1"/>
</dbReference>
<dbReference type="SUPFAM" id="SSF53335">
    <property type="entry name" value="S-adenosyl-L-methionine-dependent methyltransferases"/>
    <property type="match status" value="1"/>
</dbReference>
<dbReference type="PROSITE" id="PS51625">
    <property type="entry name" value="SAM_MT_TRMB"/>
    <property type="match status" value="1"/>
</dbReference>
<keyword id="KW-0489">Methyltransferase</keyword>
<keyword id="KW-0949">S-adenosyl-L-methionine</keyword>
<keyword id="KW-0808">Transferase</keyword>
<keyword id="KW-0819">tRNA processing</keyword>
<feature type="chain" id="PRO_0000171316" description="tRNA (guanine-N(7)-)-methyltransferase">
    <location>
        <begin position="1"/>
        <end position="224"/>
    </location>
</feature>
<feature type="active site" evidence="1">
    <location>
        <position position="129"/>
    </location>
</feature>
<feature type="binding site" evidence="2">
    <location>
        <position position="54"/>
    </location>
    <ligand>
        <name>S-adenosyl-L-methionine</name>
        <dbReference type="ChEBI" id="CHEBI:59789"/>
    </ligand>
</feature>
<feature type="binding site" evidence="2">
    <location>
        <position position="79"/>
    </location>
    <ligand>
        <name>S-adenosyl-L-methionine</name>
        <dbReference type="ChEBI" id="CHEBI:59789"/>
    </ligand>
</feature>
<feature type="binding site" evidence="2">
    <location>
        <position position="129"/>
    </location>
    <ligand>
        <name>S-adenosyl-L-methionine</name>
        <dbReference type="ChEBI" id="CHEBI:59789"/>
    </ligand>
</feature>
<feature type="binding site" evidence="2">
    <location>
        <position position="133"/>
    </location>
    <ligand>
        <name>substrate</name>
    </ligand>
</feature>
<feature type="binding site" evidence="2">
    <location>
        <position position="165"/>
    </location>
    <ligand>
        <name>substrate</name>
    </ligand>
</feature>
<name>TRMB_CHLPN</name>
<reference key="1">
    <citation type="journal article" date="1999" name="Nat. Genet.">
        <title>Comparative genomes of Chlamydia pneumoniae and C. trachomatis.</title>
        <authorList>
            <person name="Kalman S."/>
            <person name="Mitchell W.P."/>
            <person name="Marathe R."/>
            <person name="Lammel C.J."/>
            <person name="Fan J."/>
            <person name="Hyman R.W."/>
            <person name="Olinger L."/>
            <person name="Grimwood J."/>
            <person name="Davis R.W."/>
            <person name="Stephens R.S."/>
        </authorList>
    </citation>
    <scope>NUCLEOTIDE SEQUENCE [LARGE SCALE GENOMIC DNA]</scope>
    <source>
        <strain>CWL029</strain>
    </source>
</reference>
<reference key="2">
    <citation type="journal article" date="2000" name="Nucleic Acids Res.">
        <title>Genome sequences of Chlamydia trachomatis MoPn and Chlamydia pneumoniae AR39.</title>
        <authorList>
            <person name="Read T.D."/>
            <person name="Brunham R.C."/>
            <person name="Shen C."/>
            <person name="Gill S.R."/>
            <person name="Heidelberg J.F."/>
            <person name="White O."/>
            <person name="Hickey E.K."/>
            <person name="Peterson J.D."/>
            <person name="Utterback T.R."/>
            <person name="Berry K.J."/>
            <person name="Bass S."/>
            <person name="Linher K.D."/>
            <person name="Weidman J.F."/>
            <person name="Khouri H.M."/>
            <person name="Craven B."/>
            <person name="Bowman C."/>
            <person name="Dodson R.J."/>
            <person name="Gwinn M.L."/>
            <person name="Nelson W.C."/>
            <person name="DeBoy R.T."/>
            <person name="Kolonay J.F."/>
            <person name="McClarty G."/>
            <person name="Salzberg S.L."/>
            <person name="Eisen J.A."/>
            <person name="Fraser C.M."/>
        </authorList>
    </citation>
    <scope>NUCLEOTIDE SEQUENCE [LARGE SCALE GENOMIC DNA]</scope>
    <source>
        <strain>AR39</strain>
    </source>
</reference>
<reference key="3">
    <citation type="journal article" date="2000" name="Nucleic Acids Res.">
        <title>Comparison of whole genome sequences of Chlamydia pneumoniae J138 from Japan and CWL029 from USA.</title>
        <authorList>
            <person name="Shirai M."/>
            <person name="Hirakawa H."/>
            <person name="Kimoto M."/>
            <person name="Tabuchi M."/>
            <person name="Kishi F."/>
            <person name="Ouchi K."/>
            <person name="Shiba T."/>
            <person name="Ishii K."/>
            <person name="Hattori M."/>
            <person name="Kuhara S."/>
            <person name="Nakazawa T."/>
        </authorList>
    </citation>
    <scope>NUCLEOTIDE SEQUENCE [LARGE SCALE GENOMIC DNA]</scope>
    <source>
        <strain>J138</strain>
    </source>
</reference>
<reference key="4">
    <citation type="submission" date="2002-05" db="EMBL/GenBank/DDBJ databases">
        <title>The genome sequence of Chlamydia pneumoniae TW183 and comparison with other Chlamydia strains based on whole genome sequence analysis.</title>
        <authorList>
            <person name="Geng M.M."/>
            <person name="Schuhmacher A."/>
            <person name="Muehldorfer I."/>
            <person name="Bensch K.W."/>
            <person name="Schaefer K.P."/>
            <person name="Schneider S."/>
            <person name="Pohl T."/>
            <person name="Essig A."/>
            <person name="Marre R."/>
            <person name="Melchers K."/>
        </authorList>
    </citation>
    <scope>NUCLEOTIDE SEQUENCE [LARGE SCALE GENOMIC DNA]</scope>
    <source>
        <strain>TW-183</strain>
    </source>
</reference>
<sequence length="224" mass="26729">MKPQDLSPPFLWKERRPCIQDGVLYVPRHYFEHQNFSTSYHQEFFQNHTSIACELCSGNGDWVVAQAQKDPQVLWIAVEQRFDRVRKIWSKMINHQIQNLRIVCGTAETFFQYYVPDQFLQRLVVNFPDPWPKMRHRKHRLLQPSFVQEISRSLQDSAVFALATDDKTYLLESIEALQTHLAPRMETPYYIKMTDTYGNSWFENLWRTKGQEIFYTEFIKKAGI</sequence>
<organism>
    <name type="scientific">Chlamydia pneumoniae</name>
    <name type="common">Chlamydophila pneumoniae</name>
    <dbReference type="NCBI Taxonomy" id="83558"/>
    <lineage>
        <taxon>Bacteria</taxon>
        <taxon>Pseudomonadati</taxon>
        <taxon>Chlamydiota</taxon>
        <taxon>Chlamydiia</taxon>
        <taxon>Chlamydiales</taxon>
        <taxon>Chlamydiaceae</taxon>
        <taxon>Chlamydia/Chlamydophila group</taxon>
        <taxon>Chlamydia</taxon>
    </lineage>
</organism>